<dbReference type="EMBL" id="CP000575">
    <property type="protein sequence ID" value="ABN69991.1"/>
    <property type="molecule type" value="Genomic_DNA"/>
</dbReference>
<dbReference type="RefSeq" id="WP_011839182.1">
    <property type="nucleotide sequence ID" value="NC_009033.1"/>
</dbReference>
<dbReference type="SMR" id="A3DMY1"/>
<dbReference type="STRING" id="399550.Smar_0891"/>
<dbReference type="GeneID" id="4907579"/>
<dbReference type="KEGG" id="smr:Smar_0891"/>
<dbReference type="eggNOG" id="arCOG00497">
    <property type="taxonomic scope" value="Archaea"/>
</dbReference>
<dbReference type="HOGENOM" id="CLU_070010_4_0_2"/>
<dbReference type="OrthoDB" id="28313at2157"/>
<dbReference type="Proteomes" id="UP000000254">
    <property type="component" value="Chromosome"/>
</dbReference>
<dbReference type="GO" id="GO:0016787">
    <property type="term" value="F:hydrolase activity"/>
    <property type="evidence" value="ECO:0007669"/>
    <property type="project" value="UniProtKB-UniRule"/>
</dbReference>
<dbReference type="Gene3D" id="3.60.15.10">
    <property type="entry name" value="Ribonuclease Z/Hydroxyacylglutathione hydrolase-like"/>
    <property type="match status" value="1"/>
</dbReference>
<dbReference type="HAMAP" id="MF_00457">
    <property type="entry name" value="UPF0173"/>
    <property type="match status" value="1"/>
</dbReference>
<dbReference type="InterPro" id="IPR001279">
    <property type="entry name" value="Metallo-B-lactamas"/>
</dbReference>
<dbReference type="InterPro" id="IPR036866">
    <property type="entry name" value="RibonucZ/Hydroxyglut_hydro"/>
</dbReference>
<dbReference type="InterPro" id="IPR022877">
    <property type="entry name" value="UPF0173"/>
</dbReference>
<dbReference type="InterPro" id="IPR050114">
    <property type="entry name" value="UPF0173_UPF0282_UlaG_hydrolase"/>
</dbReference>
<dbReference type="NCBIfam" id="NF001911">
    <property type="entry name" value="PRK00685.1"/>
    <property type="match status" value="1"/>
</dbReference>
<dbReference type="PANTHER" id="PTHR43546:SF3">
    <property type="entry name" value="UPF0173 METAL-DEPENDENT HYDROLASE MJ1163"/>
    <property type="match status" value="1"/>
</dbReference>
<dbReference type="PANTHER" id="PTHR43546">
    <property type="entry name" value="UPF0173 METAL-DEPENDENT HYDROLASE MJ1163-RELATED"/>
    <property type="match status" value="1"/>
</dbReference>
<dbReference type="Pfam" id="PF12706">
    <property type="entry name" value="Lactamase_B_2"/>
    <property type="match status" value="1"/>
</dbReference>
<dbReference type="SMART" id="SM00849">
    <property type="entry name" value="Lactamase_B"/>
    <property type="match status" value="1"/>
</dbReference>
<dbReference type="SUPFAM" id="SSF56281">
    <property type="entry name" value="Metallo-hydrolase/oxidoreductase"/>
    <property type="match status" value="1"/>
</dbReference>
<evidence type="ECO:0000255" key="1">
    <source>
        <dbReference type="HAMAP-Rule" id="MF_00457"/>
    </source>
</evidence>
<sequence>MAIIKYLGHSAFEIVLTGLDGAEKTILIDPWIENPLSPVKLSDYKNRKIDYIFVTHDHGDHLGNAIEIAKETGAKIVGIFEIALYAREKGVQSIDGNIGGKLNIPDLFAVLTPAWHSSNRGAPTGVVVGGKDVTIYHAGDTGLFMEMSLIGELYGPDIALLPIGGHYTMGVKEAVKAVQLIRPKIAIPMHYNTFTPIKADPEEFKKLVESTTPTKVVILKPGETFTYP</sequence>
<name>Y891_STAMF</name>
<reference key="1">
    <citation type="journal article" date="2009" name="BMC Genomics">
        <title>The complete genome sequence of Staphylothermus marinus reveals differences in sulfur metabolism among heterotrophic Crenarchaeota.</title>
        <authorList>
            <person name="Anderson I.J."/>
            <person name="Dharmarajan L."/>
            <person name="Rodriguez J."/>
            <person name="Hooper S."/>
            <person name="Porat I."/>
            <person name="Ulrich L.E."/>
            <person name="Elkins J.G."/>
            <person name="Mavromatis K."/>
            <person name="Sun H."/>
            <person name="Land M."/>
            <person name="Lapidus A."/>
            <person name="Lucas S."/>
            <person name="Barry K."/>
            <person name="Huber H."/>
            <person name="Zhulin I.B."/>
            <person name="Whitman W.B."/>
            <person name="Mukhopadhyay B."/>
            <person name="Woese C."/>
            <person name="Bristow J."/>
            <person name="Kyrpides N."/>
        </authorList>
    </citation>
    <scope>NUCLEOTIDE SEQUENCE [LARGE SCALE GENOMIC DNA]</scope>
    <source>
        <strain>ATCC 43588 / DSM 3639 / JCM 9404 / F1</strain>
    </source>
</reference>
<reference key="2">
    <citation type="journal article" date="2009" name="Stand. Genomic Sci.">
        <title>Complete genome sequence of Staphylothermus marinus Stetter and Fiala 1986 type strain F1.</title>
        <authorList>
            <person name="Anderson I.J."/>
            <person name="Sun H."/>
            <person name="Lapidus A."/>
            <person name="Copeland A."/>
            <person name="Glavina Del Rio T."/>
            <person name="Tice H."/>
            <person name="Dalin E."/>
            <person name="Lucas S."/>
            <person name="Barry K."/>
            <person name="Land M."/>
            <person name="Richardson P."/>
            <person name="Huber H."/>
            <person name="Kyrpides N.C."/>
        </authorList>
    </citation>
    <scope>NUCLEOTIDE SEQUENCE [LARGE SCALE GENOMIC DNA]</scope>
    <source>
        <strain>ATCC 43588 / DSM 3639 / JCM 9404 / F1</strain>
    </source>
</reference>
<feature type="chain" id="PRO_1000013513" description="UPF0173 metal-dependent hydrolase Smar_0891">
    <location>
        <begin position="1"/>
        <end position="228"/>
    </location>
</feature>
<protein>
    <recommendedName>
        <fullName evidence="1">UPF0173 metal-dependent hydrolase Smar_0891</fullName>
    </recommendedName>
</protein>
<proteinExistence type="inferred from homology"/>
<comment type="similarity">
    <text evidence="1">Belongs to the UPF0173 family.</text>
</comment>
<organism>
    <name type="scientific">Staphylothermus marinus (strain ATCC 43588 / DSM 3639 / JCM 9404 / F1)</name>
    <dbReference type="NCBI Taxonomy" id="399550"/>
    <lineage>
        <taxon>Archaea</taxon>
        <taxon>Thermoproteota</taxon>
        <taxon>Thermoprotei</taxon>
        <taxon>Desulfurococcales</taxon>
        <taxon>Desulfurococcaceae</taxon>
        <taxon>Staphylothermus</taxon>
    </lineage>
</organism>
<keyword id="KW-0378">Hydrolase</keyword>
<keyword id="KW-1185">Reference proteome</keyword>
<gene>
    <name type="ordered locus">Smar_0891</name>
</gene>
<accession>A3DMY1</accession>